<accession>Q1BGW9</accession>
<dbReference type="EMBL" id="CP000380">
    <property type="protein sequence ID" value="ABF81136.1"/>
    <property type="molecule type" value="Genomic_DNA"/>
</dbReference>
<dbReference type="SMR" id="Q1BGW9"/>
<dbReference type="HOGENOM" id="CLU_113688_2_2_4"/>
<dbReference type="GO" id="GO:0005829">
    <property type="term" value="C:cytosol"/>
    <property type="evidence" value="ECO:0007669"/>
    <property type="project" value="TreeGrafter"/>
</dbReference>
<dbReference type="GO" id="GO:0003723">
    <property type="term" value="F:RNA binding"/>
    <property type="evidence" value="ECO:0007669"/>
    <property type="project" value="UniProtKB-UniRule"/>
</dbReference>
<dbReference type="GO" id="GO:0006355">
    <property type="term" value="P:regulation of DNA-templated transcription"/>
    <property type="evidence" value="ECO:0007669"/>
    <property type="project" value="InterPro"/>
</dbReference>
<dbReference type="GO" id="GO:0043487">
    <property type="term" value="P:regulation of RNA stability"/>
    <property type="evidence" value="ECO:0007669"/>
    <property type="project" value="TreeGrafter"/>
</dbReference>
<dbReference type="GO" id="GO:0045974">
    <property type="term" value="P:regulation of translation, ncRNA-mediated"/>
    <property type="evidence" value="ECO:0007669"/>
    <property type="project" value="TreeGrafter"/>
</dbReference>
<dbReference type="CDD" id="cd01716">
    <property type="entry name" value="Hfq"/>
    <property type="match status" value="1"/>
</dbReference>
<dbReference type="FunFam" id="2.30.30.100:FF:000001">
    <property type="entry name" value="RNA-binding protein Hfq"/>
    <property type="match status" value="1"/>
</dbReference>
<dbReference type="Gene3D" id="2.30.30.100">
    <property type="match status" value="1"/>
</dbReference>
<dbReference type="HAMAP" id="MF_00436">
    <property type="entry name" value="Hfq"/>
    <property type="match status" value="1"/>
</dbReference>
<dbReference type="InterPro" id="IPR005001">
    <property type="entry name" value="Hfq"/>
</dbReference>
<dbReference type="InterPro" id="IPR010920">
    <property type="entry name" value="LSM_dom_sf"/>
</dbReference>
<dbReference type="InterPro" id="IPR047575">
    <property type="entry name" value="Sm"/>
</dbReference>
<dbReference type="NCBIfam" id="TIGR02383">
    <property type="entry name" value="Hfq"/>
    <property type="match status" value="1"/>
</dbReference>
<dbReference type="NCBIfam" id="NF001602">
    <property type="entry name" value="PRK00395.1"/>
    <property type="match status" value="1"/>
</dbReference>
<dbReference type="PANTHER" id="PTHR34772">
    <property type="entry name" value="RNA-BINDING PROTEIN HFQ"/>
    <property type="match status" value="1"/>
</dbReference>
<dbReference type="PANTHER" id="PTHR34772:SF1">
    <property type="entry name" value="RNA-BINDING PROTEIN HFQ"/>
    <property type="match status" value="1"/>
</dbReference>
<dbReference type="Pfam" id="PF17209">
    <property type="entry name" value="Hfq"/>
    <property type="match status" value="1"/>
</dbReference>
<dbReference type="SUPFAM" id="SSF50182">
    <property type="entry name" value="Sm-like ribonucleoproteins"/>
    <property type="match status" value="1"/>
</dbReference>
<dbReference type="PROSITE" id="PS52002">
    <property type="entry name" value="SM"/>
    <property type="match status" value="1"/>
</dbReference>
<keyword id="KW-0694">RNA-binding</keyword>
<keyword id="KW-0346">Stress response</keyword>
<feature type="chain" id="PRO_0000265142" description="RNA-binding protein Hfq">
    <location>
        <begin position="1"/>
        <end position="79"/>
    </location>
</feature>
<feature type="domain" description="Sm" evidence="2">
    <location>
        <begin position="10"/>
        <end position="69"/>
    </location>
</feature>
<name>HFQ_BURO1</name>
<organism>
    <name type="scientific">Burkholderia orbicola (strain AU 1054)</name>
    <dbReference type="NCBI Taxonomy" id="331271"/>
    <lineage>
        <taxon>Bacteria</taxon>
        <taxon>Pseudomonadati</taxon>
        <taxon>Pseudomonadota</taxon>
        <taxon>Betaproteobacteria</taxon>
        <taxon>Burkholderiales</taxon>
        <taxon>Burkholderiaceae</taxon>
        <taxon>Burkholderia</taxon>
        <taxon>Burkholderia cepacia complex</taxon>
        <taxon>Burkholderia orbicola</taxon>
    </lineage>
</organism>
<proteinExistence type="inferred from homology"/>
<evidence type="ECO:0000255" key="1">
    <source>
        <dbReference type="HAMAP-Rule" id="MF_00436"/>
    </source>
</evidence>
<evidence type="ECO:0000255" key="2">
    <source>
        <dbReference type="PROSITE-ProRule" id="PRU01346"/>
    </source>
</evidence>
<comment type="function">
    <text evidence="1">RNA chaperone that binds small regulatory RNA (sRNAs) and mRNAs to facilitate mRNA translational regulation in response to envelope stress, environmental stress and changes in metabolite concentrations. Also binds with high specificity to tRNAs.</text>
</comment>
<comment type="subunit">
    <text evidence="1">Homohexamer.</text>
</comment>
<comment type="similarity">
    <text evidence="1">Belongs to the Hfq family.</text>
</comment>
<protein>
    <recommendedName>
        <fullName evidence="1">RNA-binding protein Hfq</fullName>
    </recommendedName>
</protein>
<sequence>MSNKGQLLQDPFLNALRKEHVPVSIYLVNGIKLQGNIESFDQYVVLLRNTVTQMVYKHAISTVVPARPVNFHPDAEASS</sequence>
<gene>
    <name evidence="1" type="primary">hfq</name>
    <name type="ordered locus">Bcen_6272</name>
</gene>
<reference key="1">
    <citation type="submission" date="2006-05" db="EMBL/GenBank/DDBJ databases">
        <title>Complete sequence of chromosome 3 of Burkholderia cenocepacia AU 1054.</title>
        <authorList>
            <consortium name="US DOE Joint Genome Institute"/>
            <person name="Copeland A."/>
            <person name="Lucas S."/>
            <person name="Lapidus A."/>
            <person name="Barry K."/>
            <person name="Detter J.C."/>
            <person name="Glavina del Rio T."/>
            <person name="Hammon N."/>
            <person name="Israni S."/>
            <person name="Dalin E."/>
            <person name="Tice H."/>
            <person name="Pitluck S."/>
            <person name="Chain P."/>
            <person name="Malfatti S."/>
            <person name="Shin M."/>
            <person name="Vergez L."/>
            <person name="Schmutz J."/>
            <person name="Larimer F."/>
            <person name="Land M."/>
            <person name="Hauser L."/>
            <person name="Kyrpides N."/>
            <person name="Lykidis A."/>
            <person name="LiPuma J.J."/>
            <person name="Konstantinidis K."/>
            <person name="Tiedje J.M."/>
            <person name="Richardson P."/>
        </authorList>
    </citation>
    <scope>NUCLEOTIDE SEQUENCE [LARGE SCALE GENOMIC DNA]</scope>
    <source>
        <strain>AU 1054</strain>
    </source>
</reference>